<gene>
    <name evidence="1" type="primary">clpS</name>
    <name type="ordered locus">JJD26997_0615</name>
</gene>
<protein>
    <recommendedName>
        <fullName evidence="1">ATP-dependent Clp protease adapter protein ClpS</fullName>
    </recommendedName>
</protein>
<organism>
    <name type="scientific">Campylobacter jejuni subsp. doylei (strain ATCC BAA-1458 / RM4099 / 269.97)</name>
    <dbReference type="NCBI Taxonomy" id="360109"/>
    <lineage>
        <taxon>Bacteria</taxon>
        <taxon>Pseudomonadati</taxon>
        <taxon>Campylobacterota</taxon>
        <taxon>Epsilonproteobacteria</taxon>
        <taxon>Campylobacterales</taxon>
        <taxon>Campylobacteraceae</taxon>
        <taxon>Campylobacter</taxon>
    </lineage>
</organism>
<sequence>MLKTQTLEQTKLSEPKMYKVILLNDDVTTMDFVIEILMNIFHQNLEKASQTMLEIHHNGSGICGIYTQEIALSKQKKVIDAAKLANFPLQAKVEEE</sequence>
<evidence type="ECO:0000255" key="1">
    <source>
        <dbReference type="HAMAP-Rule" id="MF_00302"/>
    </source>
</evidence>
<feature type="chain" id="PRO_1000022603" description="ATP-dependent Clp protease adapter protein ClpS">
    <location>
        <begin position="1"/>
        <end position="96"/>
    </location>
</feature>
<accession>A7H2Q0</accession>
<reference key="1">
    <citation type="submission" date="2007-07" db="EMBL/GenBank/DDBJ databases">
        <title>Complete genome sequence of Campylobacter jejuni subsp doylei 269.97 isolated from human blood.</title>
        <authorList>
            <person name="Fouts D.E."/>
            <person name="Mongodin E.F."/>
            <person name="Puiu D."/>
            <person name="Sebastian Y."/>
            <person name="Miller W.G."/>
            <person name="Mandrell R.E."/>
            <person name="Lastovica A.J."/>
            <person name="Nelson K.E."/>
        </authorList>
    </citation>
    <scope>NUCLEOTIDE SEQUENCE [LARGE SCALE GENOMIC DNA]</scope>
    <source>
        <strain>ATCC BAA-1458 / RM4099 / 269.97</strain>
    </source>
</reference>
<comment type="function">
    <text evidence="1">Involved in the modulation of the specificity of the ClpAP-mediated ATP-dependent protein degradation.</text>
</comment>
<comment type="subunit">
    <text evidence="1">Binds to the N-terminal domain of the chaperone ClpA.</text>
</comment>
<comment type="similarity">
    <text evidence="1">Belongs to the ClpS family.</text>
</comment>
<dbReference type="EMBL" id="CP000768">
    <property type="protein sequence ID" value="ABS44601.1"/>
    <property type="molecule type" value="Genomic_DNA"/>
</dbReference>
<dbReference type="SMR" id="A7H2Q0"/>
<dbReference type="KEGG" id="cjd:JJD26997_0615"/>
<dbReference type="HOGENOM" id="CLU_134358_1_0_7"/>
<dbReference type="Proteomes" id="UP000002302">
    <property type="component" value="Chromosome"/>
</dbReference>
<dbReference type="GO" id="GO:0030163">
    <property type="term" value="P:protein catabolic process"/>
    <property type="evidence" value="ECO:0007669"/>
    <property type="project" value="InterPro"/>
</dbReference>
<dbReference type="GO" id="GO:0006508">
    <property type="term" value="P:proteolysis"/>
    <property type="evidence" value="ECO:0007669"/>
    <property type="project" value="UniProtKB-UniRule"/>
</dbReference>
<dbReference type="FunFam" id="3.30.1390.10:FF:000002">
    <property type="entry name" value="ATP-dependent Clp protease adapter protein ClpS"/>
    <property type="match status" value="1"/>
</dbReference>
<dbReference type="Gene3D" id="3.30.1390.10">
    <property type="match status" value="1"/>
</dbReference>
<dbReference type="HAMAP" id="MF_00302">
    <property type="entry name" value="ClpS"/>
    <property type="match status" value="1"/>
</dbReference>
<dbReference type="InterPro" id="IPR022935">
    <property type="entry name" value="ClpS"/>
</dbReference>
<dbReference type="InterPro" id="IPR003769">
    <property type="entry name" value="ClpS_core"/>
</dbReference>
<dbReference type="InterPro" id="IPR014719">
    <property type="entry name" value="Ribosomal_bL12_C/ClpS-like"/>
</dbReference>
<dbReference type="PANTHER" id="PTHR33473:SF19">
    <property type="entry name" value="ATP-DEPENDENT CLP PROTEASE ADAPTER PROTEIN CLPS"/>
    <property type="match status" value="1"/>
</dbReference>
<dbReference type="PANTHER" id="PTHR33473">
    <property type="entry name" value="ATP-DEPENDENT CLP PROTEASE ADAPTER PROTEIN CLPS1, CHLOROPLASTIC"/>
    <property type="match status" value="1"/>
</dbReference>
<dbReference type="Pfam" id="PF02617">
    <property type="entry name" value="ClpS"/>
    <property type="match status" value="1"/>
</dbReference>
<dbReference type="SUPFAM" id="SSF54736">
    <property type="entry name" value="ClpS-like"/>
    <property type="match status" value="1"/>
</dbReference>
<proteinExistence type="inferred from homology"/>
<name>CLPS_CAMJD</name>